<feature type="chain" id="PRO_0000167995" description="Small ribosomal subunit protein bS20">
    <location>
        <begin position="1"/>
        <end position="87"/>
    </location>
</feature>
<feature type="helix" evidence="3">
    <location>
        <begin position="5"/>
        <end position="37"/>
    </location>
</feature>
<feature type="helix" evidence="3">
    <location>
        <begin position="41"/>
        <end position="57"/>
    </location>
</feature>
<feature type="strand" evidence="3">
    <location>
        <begin position="58"/>
        <end position="60"/>
    </location>
</feature>
<feature type="helix" evidence="3">
    <location>
        <begin position="62"/>
        <end position="79"/>
    </location>
</feature>
<proteinExistence type="evidence at protein level"/>
<name>RS20_MYCPN</name>
<keyword id="KW-0002">3D-structure</keyword>
<keyword id="KW-1185">Reference proteome</keyword>
<keyword id="KW-0687">Ribonucleoprotein</keyword>
<keyword id="KW-0689">Ribosomal protein</keyword>
<keyword id="KW-0694">RNA-binding</keyword>
<keyword id="KW-0699">rRNA-binding</keyword>
<comment type="function">
    <text evidence="1">Binds directly to 16S ribosomal RNA.</text>
</comment>
<comment type="similarity">
    <text evidence="1">Belongs to the bacterial ribosomal protein bS20 family.</text>
</comment>
<gene>
    <name evidence="1" type="primary">rpsT</name>
    <name type="ordered locus">MPN_541</name>
    <name type="ORF">MP301</name>
</gene>
<evidence type="ECO:0000255" key="1">
    <source>
        <dbReference type="HAMAP-Rule" id="MF_00500"/>
    </source>
</evidence>
<evidence type="ECO:0000305" key="2"/>
<evidence type="ECO:0007829" key="3">
    <source>
        <dbReference type="PDB" id="8P6P"/>
    </source>
</evidence>
<dbReference type="EMBL" id="U00089">
    <property type="protein sequence ID" value="AAB95949.1"/>
    <property type="molecule type" value="Genomic_DNA"/>
</dbReference>
<dbReference type="PIR" id="S73627">
    <property type="entry name" value="S73627"/>
</dbReference>
<dbReference type="RefSeq" id="NP_110230.1">
    <property type="nucleotide sequence ID" value="NC_000912.1"/>
</dbReference>
<dbReference type="RefSeq" id="WP_010874898.1">
    <property type="nucleotide sequence ID" value="NZ_OU342337.1"/>
</dbReference>
<dbReference type="PDB" id="7OOC">
    <property type="method" value="EM"/>
    <property type="resolution" value="3.70 A"/>
    <property type="chains" value="S=1-87"/>
</dbReference>
<dbReference type="PDB" id="7P6Z">
    <property type="method" value="EM"/>
    <property type="resolution" value="3.50 A"/>
    <property type="chains" value="S=1-87"/>
</dbReference>
<dbReference type="PDB" id="7PAH">
    <property type="method" value="EM"/>
    <property type="resolution" value="9.50 A"/>
    <property type="chains" value="S=1-87"/>
</dbReference>
<dbReference type="PDB" id="7PAI">
    <property type="method" value="EM"/>
    <property type="resolution" value="6.70 A"/>
    <property type="chains" value="S=1-87"/>
</dbReference>
<dbReference type="PDB" id="7PAJ">
    <property type="method" value="EM"/>
    <property type="resolution" value="7.30 A"/>
    <property type="chains" value="S=1-87"/>
</dbReference>
<dbReference type="PDB" id="7PAK">
    <property type="method" value="EM"/>
    <property type="resolution" value="5.30 A"/>
    <property type="chains" value="S=1-87"/>
</dbReference>
<dbReference type="PDB" id="7PAL">
    <property type="method" value="EM"/>
    <property type="resolution" value="4.70 A"/>
    <property type="chains" value="S=1-87"/>
</dbReference>
<dbReference type="PDB" id="7PAM">
    <property type="method" value="EM"/>
    <property type="resolution" value="6.80 A"/>
    <property type="chains" value="S=1-87"/>
</dbReference>
<dbReference type="PDB" id="7PAN">
    <property type="method" value="EM"/>
    <property type="resolution" value="9.70 A"/>
    <property type="chains" value="S=1-87"/>
</dbReference>
<dbReference type="PDB" id="7PAO">
    <property type="method" value="EM"/>
    <property type="resolution" value="7.00 A"/>
    <property type="chains" value="S=1-87"/>
</dbReference>
<dbReference type="PDB" id="7PAQ">
    <property type="method" value="EM"/>
    <property type="resolution" value="8.90 A"/>
    <property type="chains" value="S=1-87"/>
</dbReference>
<dbReference type="PDB" id="7PAR">
    <property type="method" value="EM"/>
    <property type="resolution" value="8.20 A"/>
    <property type="chains" value="S=1-87"/>
</dbReference>
<dbReference type="PDB" id="7PAS">
    <property type="method" value="EM"/>
    <property type="resolution" value="16.00 A"/>
    <property type="chains" value="S=1-87"/>
</dbReference>
<dbReference type="PDB" id="7PH9">
    <property type="method" value="EM"/>
    <property type="resolution" value="8.70 A"/>
    <property type="chains" value="S=1-87"/>
</dbReference>
<dbReference type="PDB" id="7PHA">
    <property type="method" value="EM"/>
    <property type="resolution" value="8.50 A"/>
    <property type="chains" value="S=1-87"/>
</dbReference>
<dbReference type="PDB" id="7PHB">
    <property type="method" value="EM"/>
    <property type="resolution" value="4.90 A"/>
    <property type="chains" value="S=1-87"/>
</dbReference>
<dbReference type="PDB" id="7PHC">
    <property type="method" value="EM"/>
    <property type="resolution" value="9.90 A"/>
    <property type="chains" value="S=1-87"/>
</dbReference>
<dbReference type="PDB" id="7PI8">
    <property type="method" value="EM"/>
    <property type="resolution" value="8.90 A"/>
    <property type="chains" value="S=1-87"/>
</dbReference>
<dbReference type="PDB" id="7PI9">
    <property type="method" value="EM"/>
    <property type="resolution" value="6.30 A"/>
    <property type="chains" value="S=1-87"/>
</dbReference>
<dbReference type="PDB" id="7PIA">
    <property type="method" value="EM"/>
    <property type="resolution" value="13.60 A"/>
    <property type="chains" value="S=1-87"/>
</dbReference>
<dbReference type="PDB" id="7PIB">
    <property type="method" value="EM"/>
    <property type="resolution" value="4.70 A"/>
    <property type="chains" value="S=1-87"/>
</dbReference>
<dbReference type="PDB" id="7PIC">
    <property type="method" value="EM"/>
    <property type="resolution" value="9.10 A"/>
    <property type="chains" value="S=1-87"/>
</dbReference>
<dbReference type="PDB" id="7PIO">
    <property type="method" value="EM"/>
    <property type="resolution" value="9.50 A"/>
    <property type="chains" value="S=1-87"/>
</dbReference>
<dbReference type="PDB" id="7PIP">
    <property type="method" value="EM"/>
    <property type="resolution" value="9.30 A"/>
    <property type="chains" value="S=1-87"/>
</dbReference>
<dbReference type="PDB" id="7PIQ">
    <property type="method" value="EM"/>
    <property type="resolution" value="9.70 A"/>
    <property type="chains" value="S=1-87"/>
</dbReference>
<dbReference type="PDB" id="7PIR">
    <property type="method" value="EM"/>
    <property type="resolution" value="12.10 A"/>
    <property type="chains" value="S=1-87"/>
</dbReference>
<dbReference type="PDB" id="7PIS">
    <property type="method" value="EM"/>
    <property type="resolution" value="15.00 A"/>
    <property type="chains" value="S=1-87"/>
</dbReference>
<dbReference type="PDB" id="7PIT">
    <property type="method" value="EM"/>
    <property type="resolution" value="5.70 A"/>
    <property type="chains" value="S=1-87"/>
</dbReference>
<dbReference type="PDB" id="8P6P">
    <property type="method" value="EM"/>
    <property type="resolution" value="3.20 A"/>
    <property type="chains" value="S=1-87"/>
</dbReference>
<dbReference type="PDB" id="8P7X">
    <property type="method" value="EM"/>
    <property type="resolution" value="3.03 A"/>
    <property type="chains" value="S=1-87"/>
</dbReference>
<dbReference type="PDB" id="8P7Y">
    <property type="method" value="EM"/>
    <property type="resolution" value="3.70 A"/>
    <property type="chains" value="S=1-87"/>
</dbReference>
<dbReference type="PDB" id="8P8V">
    <property type="method" value="EM"/>
    <property type="resolution" value="8.70 A"/>
    <property type="chains" value="S=1-87"/>
</dbReference>
<dbReference type="PDB" id="8P8W">
    <property type="method" value="EM"/>
    <property type="resolution" value="8.70 A"/>
    <property type="chains" value="S=1-87"/>
</dbReference>
<dbReference type="PDBsum" id="7OOC"/>
<dbReference type="PDBsum" id="7P6Z"/>
<dbReference type="PDBsum" id="7PAH"/>
<dbReference type="PDBsum" id="7PAI"/>
<dbReference type="PDBsum" id="7PAJ"/>
<dbReference type="PDBsum" id="7PAK"/>
<dbReference type="PDBsum" id="7PAL"/>
<dbReference type="PDBsum" id="7PAM"/>
<dbReference type="PDBsum" id="7PAN"/>
<dbReference type="PDBsum" id="7PAO"/>
<dbReference type="PDBsum" id="7PAQ"/>
<dbReference type="PDBsum" id="7PAR"/>
<dbReference type="PDBsum" id="7PAS"/>
<dbReference type="PDBsum" id="7PH9"/>
<dbReference type="PDBsum" id="7PHA"/>
<dbReference type="PDBsum" id="7PHB"/>
<dbReference type="PDBsum" id="7PHC"/>
<dbReference type="PDBsum" id="7PI8"/>
<dbReference type="PDBsum" id="7PI9"/>
<dbReference type="PDBsum" id="7PIA"/>
<dbReference type="PDBsum" id="7PIB"/>
<dbReference type="PDBsum" id="7PIC"/>
<dbReference type="PDBsum" id="7PIO"/>
<dbReference type="PDBsum" id="7PIP"/>
<dbReference type="PDBsum" id="7PIQ"/>
<dbReference type="PDBsum" id="7PIR"/>
<dbReference type="PDBsum" id="7PIS"/>
<dbReference type="PDBsum" id="7PIT"/>
<dbReference type="PDBsum" id="8P6P"/>
<dbReference type="PDBsum" id="8P7X"/>
<dbReference type="PDBsum" id="8P7Y"/>
<dbReference type="PDBsum" id="8P8V"/>
<dbReference type="PDBsum" id="8P8W"/>
<dbReference type="EMDB" id="EMD-13234"/>
<dbReference type="EMDB" id="EMD-13272"/>
<dbReference type="EMDB" id="EMD-13273"/>
<dbReference type="EMDB" id="EMD-13274"/>
<dbReference type="EMDB" id="EMD-13275"/>
<dbReference type="EMDB" id="EMD-13276"/>
<dbReference type="EMDB" id="EMD-13277"/>
<dbReference type="EMDB" id="EMD-13278"/>
<dbReference type="EMDB" id="EMD-13279"/>
<dbReference type="EMDB" id="EMD-13280"/>
<dbReference type="EMDB" id="EMD-13281"/>
<dbReference type="EMDB" id="EMD-13282"/>
<dbReference type="EMDB" id="EMD-13410"/>
<dbReference type="EMDB" id="EMD-13411"/>
<dbReference type="EMDB" id="EMD-13412"/>
<dbReference type="EMDB" id="EMD-13413"/>
<dbReference type="EMDB" id="EMD-13432"/>
<dbReference type="EMDB" id="EMD-13433"/>
<dbReference type="EMDB" id="EMD-13434"/>
<dbReference type="EMDB" id="EMD-13435"/>
<dbReference type="EMDB" id="EMD-13436"/>
<dbReference type="EMDB" id="EMD-13445"/>
<dbReference type="EMDB" id="EMD-13446"/>
<dbReference type="EMDB" id="EMD-13447"/>
<dbReference type="EMDB" id="EMD-13448"/>
<dbReference type="EMDB" id="EMD-13449"/>
<dbReference type="EMDB" id="EMD-13450"/>
<dbReference type="SMR" id="P75237"/>
<dbReference type="IntAct" id="P75237">
    <property type="interactions" value="1"/>
</dbReference>
<dbReference type="STRING" id="272634.MPN_541"/>
<dbReference type="EnsemblBacteria" id="AAB95949">
    <property type="protein sequence ID" value="AAB95949"/>
    <property type="gene ID" value="MPN_541"/>
</dbReference>
<dbReference type="KEGG" id="mpn:MPN_541"/>
<dbReference type="PATRIC" id="fig|272634.6.peg.603"/>
<dbReference type="HOGENOM" id="CLU_160655_3_2_14"/>
<dbReference type="OrthoDB" id="9808392at2"/>
<dbReference type="BioCyc" id="MPNE272634:G1GJ3-891-MONOMER"/>
<dbReference type="Proteomes" id="UP000000808">
    <property type="component" value="Chromosome"/>
</dbReference>
<dbReference type="GO" id="GO:1990904">
    <property type="term" value="C:ribonucleoprotein complex"/>
    <property type="evidence" value="ECO:0007669"/>
    <property type="project" value="UniProtKB-KW"/>
</dbReference>
<dbReference type="GO" id="GO:0005840">
    <property type="term" value="C:ribosome"/>
    <property type="evidence" value="ECO:0007669"/>
    <property type="project" value="UniProtKB-KW"/>
</dbReference>
<dbReference type="GO" id="GO:0019843">
    <property type="term" value="F:rRNA binding"/>
    <property type="evidence" value="ECO:0007669"/>
    <property type="project" value="UniProtKB-UniRule"/>
</dbReference>
<dbReference type="GO" id="GO:0003735">
    <property type="term" value="F:structural constituent of ribosome"/>
    <property type="evidence" value="ECO:0007669"/>
    <property type="project" value="InterPro"/>
</dbReference>
<dbReference type="GO" id="GO:0006412">
    <property type="term" value="P:translation"/>
    <property type="evidence" value="ECO:0007669"/>
    <property type="project" value="UniProtKB-UniRule"/>
</dbReference>
<dbReference type="Gene3D" id="1.20.58.110">
    <property type="entry name" value="Ribosomal protein S20"/>
    <property type="match status" value="1"/>
</dbReference>
<dbReference type="HAMAP" id="MF_00500">
    <property type="entry name" value="Ribosomal_bS20"/>
    <property type="match status" value="1"/>
</dbReference>
<dbReference type="InterPro" id="IPR002583">
    <property type="entry name" value="Ribosomal_bS20"/>
</dbReference>
<dbReference type="InterPro" id="IPR036510">
    <property type="entry name" value="Ribosomal_bS20_sf"/>
</dbReference>
<dbReference type="NCBIfam" id="TIGR00029">
    <property type="entry name" value="S20"/>
    <property type="match status" value="1"/>
</dbReference>
<dbReference type="Pfam" id="PF01649">
    <property type="entry name" value="Ribosomal_S20p"/>
    <property type="match status" value="1"/>
</dbReference>
<dbReference type="SUPFAM" id="SSF46992">
    <property type="entry name" value="Ribosomal protein S20"/>
    <property type="match status" value="1"/>
</dbReference>
<organism>
    <name type="scientific">Mycoplasma pneumoniae (strain ATCC 29342 / M129 / Subtype 1)</name>
    <name type="common">Mycoplasmoides pneumoniae</name>
    <dbReference type="NCBI Taxonomy" id="272634"/>
    <lineage>
        <taxon>Bacteria</taxon>
        <taxon>Bacillati</taxon>
        <taxon>Mycoplasmatota</taxon>
        <taxon>Mycoplasmoidales</taxon>
        <taxon>Mycoplasmoidaceae</taxon>
        <taxon>Mycoplasmoides</taxon>
    </lineage>
</organism>
<reference key="1">
    <citation type="journal article" date="1996" name="Nucleic Acids Res.">
        <title>Complete sequence analysis of the genome of the bacterium Mycoplasma pneumoniae.</title>
        <authorList>
            <person name="Himmelreich R."/>
            <person name="Hilbert H."/>
            <person name="Plagens H."/>
            <person name="Pirkl E."/>
            <person name="Li B.-C."/>
            <person name="Herrmann R."/>
        </authorList>
    </citation>
    <scope>NUCLEOTIDE SEQUENCE [LARGE SCALE GENOMIC DNA]</scope>
    <source>
        <strain>ATCC 29342 / M129 / Subtype 1</strain>
    </source>
</reference>
<accession>P75237</accession>
<sequence length="87" mass="9971">MANIKSNEKRLRQNIKRNLNNKGQKTKLKTNVKNFHKEINLDNLGNVYSQADRLARKGIISTNRARRLKSRNVAVLNKTQVTAVEGK</sequence>
<protein>
    <recommendedName>
        <fullName evidence="1">Small ribosomal subunit protein bS20</fullName>
    </recommendedName>
    <alternativeName>
        <fullName evidence="2">30S ribosomal protein S20</fullName>
    </alternativeName>
</protein>